<dbReference type="EMBL" id="U28377">
    <property type="protein sequence ID" value="AAA69211.1"/>
    <property type="molecule type" value="Genomic_DNA"/>
</dbReference>
<dbReference type="EMBL" id="U00096">
    <property type="protein sequence ID" value="AAC76079.1"/>
    <property type="molecule type" value="Genomic_DNA"/>
</dbReference>
<dbReference type="EMBL" id="AP009048">
    <property type="protein sequence ID" value="BAE77099.1"/>
    <property type="molecule type" value="Genomic_DNA"/>
</dbReference>
<dbReference type="EMBL" id="M64472">
    <property type="status" value="NOT_ANNOTATED_CDS"/>
    <property type="molecule type" value="Genomic_DNA"/>
</dbReference>
<dbReference type="PIR" id="A65092">
    <property type="entry name" value="A65092"/>
</dbReference>
<dbReference type="RefSeq" id="NP_417515.1">
    <property type="nucleotide sequence ID" value="NC_000913.3"/>
</dbReference>
<dbReference type="RefSeq" id="WP_001272145.1">
    <property type="nucleotide sequence ID" value="NZ_STEB01000001.1"/>
</dbReference>
<dbReference type="SMR" id="P39834"/>
<dbReference type="BioGRID" id="4262962">
    <property type="interactions" value="62"/>
</dbReference>
<dbReference type="BioGRID" id="851839">
    <property type="interactions" value="25"/>
</dbReference>
<dbReference type="FunCoup" id="P39834">
    <property type="interactions" value="13"/>
</dbReference>
<dbReference type="IntAct" id="P39834">
    <property type="interactions" value="25"/>
</dbReference>
<dbReference type="STRING" id="511145.b3043"/>
<dbReference type="PaxDb" id="511145-b3043"/>
<dbReference type="EnsemblBacteria" id="AAC76079">
    <property type="protein sequence ID" value="AAC76079"/>
    <property type="gene ID" value="b3043"/>
</dbReference>
<dbReference type="GeneID" id="947522"/>
<dbReference type="KEGG" id="ecj:JW3011"/>
<dbReference type="KEGG" id="eco:b3043"/>
<dbReference type="KEGG" id="ecoc:C3026_16620"/>
<dbReference type="PATRIC" id="fig|1411691.4.peg.3688"/>
<dbReference type="EchoBASE" id="EB2266"/>
<dbReference type="eggNOG" id="COG3539">
    <property type="taxonomic scope" value="Bacteria"/>
</dbReference>
<dbReference type="HOGENOM" id="CLU_088965_3_1_6"/>
<dbReference type="InParanoid" id="P39834"/>
<dbReference type="OMA" id="TIALENC"/>
<dbReference type="OrthoDB" id="6522787at2"/>
<dbReference type="PhylomeDB" id="P39834"/>
<dbReference type="BioCyc" id="EcoCyc:EG12363-MONOMER"/>
<dbReference type="PRO" id="PR:P39834"/>
<dbReference type="Proteomes" id="UP000000625">
    <property type="component" value="Chromosome"/>
</dbReference>
<dbReference type="GO" id="GO:0009289">
    <property type="term" value="C:pilus"/>
    <property type="evidence" value="ECO:0000318"/>
    <property type="project" value="GO_Central"/>
</dbReference>
<dbReference type="GO" id="GO:0043709">
    <property type="term" value="P:cell adhesion involved in single-species biofilm formation"/>
    <property type="evidence" value="ECO:0000318"/>
    <property type="project" value="GO_Central"/>
</dbReference>
<dbReference type="Gene3D" id="2.60.40.1090">
    <property type="entry name" value="Fimbrial-type adhesion domain"/>
    <property type="match status" value="1"/>
</dbReference>
<dbReference type="InterPro" id="IPR000259">
    <property type="entry name" value="Adhesion_dom_fimbrial"/>
</dbReference>
<dbReference type="InterPro" id="IPR036937">
    <property type="entry name" value="Adhesion_dom_fimbrial_sf"/>
</dbReference>
<dbReference type="InterPro" id="IPR008966">
    <property type="entry name" value="Adhesion_dom_sf"/>
</dbReference>
<dbReference type="InterPro" id="IPR050263">
    <property type="entry name" value="Bact_Fimbrial_Adh_Pro"/>
</dbReference>
<dbReference type="NCBIfam" id="NF007276">
    <property type="entry name" value="PRK09733.1"/>
    <property type="match status" value="1"/>
</dbReference>
<dbReference type="PANTHER" id="PTHR33420">
    <property type="entry name" value="FIMBRIAL SUBUNIT ELFA-RELATED"/>
    <property type="match status" value="1"/>
</dbReference>
<dbReference type="PANTHER" id="PTHR33420:SF11">
    <property type="entry name" value="FIMBRIAL-LIKE PROTEIN"/>
    <property type="match status" value="1"/>
</dbReference>
<dbReference type="Pfam" id="PF00419">
    <property type="entry name" value="Fimbrial"/>
    <property type="match status" value="1"/>
</dbReference>
<dbReference type="SUPFAM" id="SSF49401">
    <property type="entry name" value="Bacterial adhesins"/>
    <property type="match status" value="1"/>
</dbReference>
<keyword id="KW-1015">Disulfide bond</keyword>
<keyword id="KW-0281">Fimbrium</keyword>
<keyword id="KW-1185">Reference proteome</keyword>
<keyword id="KW-0732">Signal</keyword>
<organism>
    <name type="scientific">Escherichia coli (strain K12)</name>
    <dbReference type="NCBI Taxonomy" id="83333"/>
    <lineage>
        <taxon>Bacteria</taxon>
        <taxon>Pseudomonadati</taxon>
        <taxon>Pseudomonadota</taxon>
        <taxon>Gammaproteobacteria</taxon>
        <taxon>Enterobacterales</taxon>
        <taxon>Enterobacteriaceae</taxon>
        <taxon>Escherichia</taxon>
    </lineage>
</organism>
<evidence type="ECO:0000255" key="1"/>
<evidence type="ECO:0000305" key="2"/>
<comment type="subcellular location">
    <subcellularLocation>
        <location evidence="2">Fimbrium</location>
    </subcellularLocation>
</comment>
<comment type="similarity">
    <text evidence="2">Belongs to the fimbrial protein family.</text>
</comment>
<name>YGIL_ECOLI</name>
<sequence length="183" mass="19494">MSAFKKSLLVAGVAMILSNNVFADEGHGIVKFKGEVISAPCSIKPGDEDLTVNLGEVADTVLKSDQKSLAEPFTIHLQDCMLSQGGTTYSKAKVTFTTANTMTGQSDLLKNTKETEIGGATGVGVRILDSQSGEVTLGTPVVITFNNTNSYQELNFKARMESPSKDATPGNVYAQADYKIAYE</sequence>
<accession>P39834</accession>
<accession>Q2M9F7</accession>
<accession>Q46869</accession>
<reference key="1">
    <citation type="journal article" date="1997" name="Science">
        <title>The complete genome sequence of Escherichia coli K-12.</title>
        <authorList>
            <person name="Blattner F.R."/>
            <person name="Plunkett G. III"/>
            <person name="Bloch C.A."/>
            <person name="Perna N.T."/>
            <person name="Burland V."/>
            <person name="Riley M."/>
            <person name="Collado-Vides J."/>
            <person name="Glasner J.D."/>
            <person name="Rode C.K."/>
            <person name="Mayhew G.F."/>
            <person name="Gregor J."/>
            <person name="Davis N.W."/>
            <person name="Kirkpatrick H.A."/>
            <person name="Goeden M.A."/>
            <person name="Rose D.J."/>
            <person name="Mau B."/>
            <person name="Shao Y."/>
        </authorList>
    </citation>
    <scope>NUCLEOTIDE SEQUENCE [LARGE SCALE GENOMIC DNA]</scope>
    <source>
        <strain>K12 / MG1655 / ATCC 47076</strain>
    </source>
</reference>
<reference key="2">
    <citation type="journal article" date="2006" name="Mol. Syst. Biol.">
        <title>Highly accurate genome sequences of Escherichia coli K-12 strains MG1655 and W3110.</title>
        <authorList>
            <person name="Hayashi K."/>
            <person name="Morooka N."/>
            <person name="Yamamoto Y."/>
            <person name="Fujita K."/>
            <person name="Isono K."/>
            <person name="Choi S."/>
            <person name="Ohtsubo E."/>
            <person name="Baba T."/>
            <person name="Wanner B.L."/>
            <person name="Mori H."/>
            <person name="Horiuchi T."/>
        </authorList>
    </citation>
    <scope>NUCLEOTIDE SEQUENCE [LARGE SCALE GENOMIC DNA]</scope>
    <source>
        <strain>K12 / W3110 / ATCC 27325 / DSM 5911</strain>
    </source>
</reference>
<reference key="3">
    <citation type="journal article" date="1991" name="J. Bacteriol.">
        <title>The Escherichia coli htrP gene product is essential for bacterial growth at high temperatures: mapping, cloning, sequencing, and transcriptional regulation of htrP.</title>
        <authorList>
            <person name="Raina S."/>
            <person name="Mabey L."/>
            <person name="Georgopoulos C."/>
        </authorList>
    </citation>
    <scope>NUCLEOTIDE SEQUENCE [GENOMIC DNA] OF 1-78</scope>
</reference>
<reference key="4">
    <citation type="journal article" date="1994" name="Nucleic Acids Res.">
        <title>Intrinsic and extrinsic approaches for detecting genes in a bacterial genome.</title>
        <authorList>
            <person name="Borodovsky M."/>
            <person name="Rudd K.E."/>
            <person name="Koonin E.V."/>
        </authorList>
    </citation>
    <scope>IDENTIFICATION</scope>
</reference>
<feature type="signal peptide" evidence="1">
    <location>
        <begin position="1"/>
        <end position="23"/>
    </location>
</feature>
<feature type="chain" id="PRO_0000009260" description="Uncharacterized fimbrial-like protein YgiL">
    <location>
        <begin position="24"/>
        <end position="183"/>
    </location>
</feature>
<feature type="disulfide bond" evidence="1">
    <location>
        <begin position="41"/>
        <end position="80"/>
    </location>
</feature>
<feature type="sequence conflict" description="In Ref. 3." evidence="2" ref="3">
    <original>A</original>
    <variation>T</variation>
    <location>
        <position position="3"/>
    </location>
</feature>
<feature type="sequence conflict" description="In Ref. 3." evidence="2" ref="3">
    <original>M</original>
    <variation>T</variation>
    <location>
        <position position="15"/>
    </location>
</feature>
<proteinExistence type="inferred from homology"/>
<protein>
    <recommendedName>
        <fullName>Uncharacterized fimbrial-like protein YgiL</fullName>
    </recommendedName>
</protein>
<gene>
    <name type="primary">ygiL</name>
    <name type="ordered locus">b3043</name>
    <name type="ordered locus">JW3011</name>
</gene>